<sequence>MKYIGAHVSAAGGLANAPARAAEIGATAFALFTKNQRQWRAAPLIPQVIDDFKIACEKYHFSAAQILPHDSYLINLGHPVSEALEKSRDAFLDEMQRCEQLGLTLLNFHPGSHLMQIAQEDCLARIAESINIALAQTEGVTAVIENTAGQGSNLGFEFEQLAAIIDGVEDKSRVGVCIDTCHAFAAGYDLRTPEACEKTFAEFGQIVGFQYLRGMHLNDAKSAFGSRVDRHHSLGEGNIGHDAFRWIMQDARFDGIPLVLETINPDIWAEEIAWLKAQQSEKAVA</sequence>
<comment type="function">
    <text evidence="1">Endonuclease IV plays a role in DNA repair. It cleaves phosphodiester bonds at apurinic or apyrimidinic (AP) sites, generating a 3'-hydroxyl group and a 5'-terminal sugar phosphate.</text>
</comment>
<comment type="catalytic activity">
    <reaction evidence="1">
        <text>Endonucleolytic cleavage to 5'-phosphooligonucleotide end-products.</text>
        <dbReference type="EC" id="3.1.21.2"/>
    </reaction>
</comment>
<comment type="cofactor">
    <cofactor evidence="1">
        <name>Zn(2+)</name>
        <dbReference type="ChEBI" id="CHEBI:29105"/>
    </cofactor>
    <text evidence="1">Binds 3 Zn(2+) ions.</text>
</comment>
<comment type="similarity">
    <text evidence="1">Belongs to the AP endonuclease 2 family.</text>
</comment>
<gene>
    <name evidence="1" type="primary">nfo</name>
    <name type="ordered locus">SARI_00686</name>
</gene>
<proteinExistence type="inferred from homology"/>
<feature type="chain" id="PRO_1000076807" description="Probable endonuclease 4">
    <location>
        <begin position="1"/>
        <end position="285"/>
    </location>
</feature>
<feature type="binding site" evidence="1">
    <location>
        <position position="69"/>
    </location>
    <ligand>
        <name>Zn(2+)</name>
        <dbReference type="ChEBI" id="CHEBI:29105"/>
        <label>1</label>
    </ligand>
</feature>
<feature type="binding site" evidence="1">
    <location>
        <position position="109"/>
    </location>
    <ligand>
        <name>Zn(2+)</name>
        <dbReference type="ChEBI" id="CHEBI:29105"/>
        <label>1</label>
    </ligand>
</feature>
<feature type="binding site" evidence="1">
    <location>
        <position position="145"/>
    </location>
    <ligand>
        <name>Zn(2+)</name>
        <dbReference type="ChEBI" id="CHEBI:29105"/>
        <label>1</label>
    </ligand>
</feature>
<feature type="binding site" evidence="1">
    <location>
        <position position="145"/>
    </location>
    <ligand>
        <name>Zn(2+)</name>
        <dbReference type="ChEBI" id="CHEBI:29105"/>
        <label>2</label>
    </ligand>
</feature>
<feature type="binding site" evidence="1">
    <location>
        <position position="179"/>
    </location>
    <ligand>
        <name>Zn(2+)</name>
        <dbReference type="ChEBI" id="CHEBI:29105"/>
        <label>2</label>
    </ligand>
</feature>
<feature type="binding site" evidence="1">
    <location>
        <position position="182"/>
    </location>
    <ligand>
        <name>Zn(2+)</name>
        <dbReference type="ChEBI" id="CHEBI:29105"/>
        <label>3</label>
    </ligand>
</feature>
<feature type="binding site" evidence="1">
    <location>
        <position position="216"/>
    </location>
    <ligand>
        <name>Zn(2+)</name>
        <dbReference type="ChEBI" id="CHEBI:29105"/>
        <label>2</label>
    </ligand>
</feature>
<feature type="binding site" evidence="1">
    <location>
        <position position="229"/>
    </location>
    <ligand>
        <name>Zn(2+)</name>
        <dbReference type="ChEBI" id="CHEBI:29105"/>
        <label>3</label>
    </ligand>
</feature>
<feature type="binding site" evidence="1">
    <location>
        <position position="231"/>
    </location>
    <ligand>
        <name>Zn(2+)</name>
        <dbReference type="ChEBI" id="CHEBI:29105"/>
        <label>3</label>
    </ligand>
</feature>
<feature type="binding site" evidence="1">
    <location>
        <position position="261"/>
    </location>
    <ligand>
        <name>Zn(2+)</name>
        <dbReference type="ChEBI" id="CHEBI:29105"/>
        <label>2</label>
    </ligand>
</feature>
<keyword id="KW-0227">DNA damage</keyword>
<keyword id="KW-0234">DNA repair</keyword>
<keyword id="KW-0255">Endonuclease</keyword>
<keyword id="KW-0378">Hydrolase</keyword>
<keyword id="KW-0479">Metal-binding</keyword>
<keyword id="KW-0540">Nuclease</keyword>
<keyword id="KW-1185">Reference proteome</keyword>
<keyword id="KW-0862">Zinc</keyword>
<name>END4_SALAR</name>
<reference key="1">
    <citation type="submission" date="2007-11" db="EMBL/GenBank/DDBJ databases">
        <authorList>
            <consortium name="The Salmonella enterica serovar Arizonae Genome Sequencing Project"/>
            <person name="McClelland M."/>
            <person name="Sanderson E.K."/>
            <person name="Porwollik S."/>
            <person name="Spieth J."/>
            <person name="Clifton W.S."/>
            <person name="Fulton R."/>
            <person name="Chunyan W."/>
            <person name="Wollam A."/>
            <person name="Shah N."/>
            <person name="Pepin K."/>
            <person name="Bhonagiri V."/>
            <person name="Nash W."/>
            <person name="Johnson M."/>
            <person name="Thiruvilangam P."/>
            <person name="Wilson R."/>
        </authorList>
    </citation>
    <scope>NUCLEOTIDE SEQUENCE [LARGE SCALE GENOMIC DNA]</scope>
    <source>
        <strain>ATCC BAA-731 / CDC346-86 / RSK2980</strain>
    </source>
</reference>
<evidence type="ECO:0000255" key="1">
    <source>
        <dbReference type="HAMAP-Rule" id="MF_00152"/>
    </source>
</evidence>
<accession>A9MK49</accession>
<dbReference type="EC" id="3.1.21.2" evidence="1"/>
<dbReference type="EMBL" id="CP000880">
    <property type="protein sequence ID" value="ABX20609.1"/>
    <property type="molecule type" value="Genomic_DNA"/>
</dbReference>
<dbReference type="SMR" id="A9MK49"/>
<dbReference type="STRING" id="41514.SARI_00686"/>
<dbReference type="KEGG" id="ses:SARI_00686"/>
<dbReference type="HOGENOM" id="CLU_025885_0_4_6"/>
<dbReference type="Proteomes" id="UP000002084">
    <property type="component" value="Chromosome"/>
</dbReference>
<dbReference type="GO" id="GO:0008833">
    <property type="term" value="F:deoxyribonuclease IV (phage-T4-induced) activity"/>
    <property type="evidence" value="ECO:0007669"/>
    <property type="project" value="UniProtKB-UniRule"/>
</dbReference>
<dbReference type="GO" id="GO:0003677">
    <property type="term" value="F:DNA binding"/>
    <property type="evidence" value="ECO:0007669"/>
    <property type="project" value="InterPro"/>
</dbReference>
<dbReference type="GO" id="GO:0003906">
    <property type="term" value="F:DNA-(apurinic or apyrimidinic site) endonuclease activity"/>
    <property type="evidence" value="ECO:0007669"/>
    <property type="project" value="TreeGrafter"/>
</dbReference>
<dbReference type="GO" id="GO:0008081">
    <property type="term" value="F:phosphoric diester hydrolase activity"/>
    <property type="evidence" value="ECO:0007669"/>
    <property type="project" value="TreeGrafter"/>
</dbReference>
<dbReference type="GO" id="GO:0008270">
    <property type="term" value="F:zinc ion binding"/>
    <property type="evidence" value="ECO:0007669"/>
    <property type="project" value="UniProtKB-UniRule"/>
</dbReference>
<dbReference type="GO" id="GO:0006284">
    <property type="term" value="P:base-excision repair"/>
    <property type="evidence" value="ECO:0007669"/>
    <property type="project" value="TreeGrafter"/>
</dbReference>
<dbReference type="CDD" id="cd00019">
    <property type="entry name" value="AP2Ec"/>
    <property type="match status" value="1"/>
</dbReference>
<dbReference type="FunFam" id="3.20.20.150:FF:000001">
    <property type="entry name" value="Probable endonuclease 4"/>
    <property type="match status" value="1"/>
</dbReference>
<dbReference type="Gene3D" id="3.20.20.150">
    <property type="entry name" value="Divalent-metal-dependent TIM barrel enzymes"/>
    <property type="match status" value="1"/>
</dbReference>
<dbReference type="HAMAP" id="MF_00152">
    <property type="entry name" value="Nfo"/>
    <property type="match status" value="1"/>
</dbReference>
<dbReference type="InterPro" id="IPR001719">
    <property type="entry name" value="AP_endonuc_2"/>
</dbReference>
<dbReference type="InterPro" id="IPR018246">
    <property type="entry name" value="AP_endonuc_F2_Zn_BS"/>
</dbReference>
<dbReference type="InterPro" id="IPR036237">
    <property type="entry name" value="Xyl_isomerase-like_sf"/>
</dbReference>
<dbReference type="InterPro" id="IPR013022">
    <property type="entry name" value="Xyl_isomerase-like_TIM-brl"/>
</dbReference>
<dbReference type="NCBIfam" id="TIGR00587">
    <property type="entry name" value="nfo"/>
    <property type="match status" value="1"/>
</dbReference>
<dbReference type="NCBIfam" id="NF002199">
    <property type="entry name" value="PRK01060.1-4"/>
    <property type="match status" value="1"/>
</dbReference>
<dbReference type="PANTHER" id="PTHR21445:SF0">
    <property type="entry name" value="APURINIC-APYRIMIDINIC ENDONUCLEASE"/>
    <property type="match status" value="1"/>
</dbReference>
<dbReference type="PANTHER" id="PTHR21445">
    <property type="entry name" value="ENDONUCLEASE IV ENDODEOXYRIBONUCLEASE IV"/>
    <property type="match status" value="1"/>
</dbReference>
<dbReference type="Pfam" id="PF01261">
    <property type="entry name" value="AP_endonuc_2"/>
    <property type="match status" value="1"/>
</dbReference>
<dbReference type="SMART" id="SM00518">
    <property type="entry name" value="AP2Ec"/>
    <property type="match status" value="1"/>
</dbReference>
<dbReference type="SUPFAM" id="SSF51658">
    <property type="entry name" value="Xylose isomerase-like"/>
    <property type="match status" value="1"/>
</dbReference>
<dbReference type="PROSITE" id="PS00729">
    <property type="entry name" value="AP_NUCLEASE_F2_1"/>
    <property type="match status" value="1"/>
</dbReference>
<dbReference type="PROSITE" id="PS00730">
    <property type="entry name" value="AP_NUCLEASE_F2_2"/>
    <property type="match status" value="1"/>
</dbReference>
<dbReference type="PROSITE" id="PS00731">
    <property type="entry name" value="AP_NUCLEASE_F2_3"/>
    <property type="match status" value="1"/>
</dbReference>
<dbReference type="PROSITE" id="PS51432">
    <property type="entry name" value="AP_NUCLEASE_F2_4"/>
    <property type="match status" value="1"/>
</dbReference>
<organism>
    <name type="scientific">Salmonella arizonae (strain ATCC BAA-731 / CDC346-86 / RSK2980)</name>
    <dbReference type="NCBI Taxonomy" id="41514"/>
    <lineage>
        <taxon>Bacteria</taxon>
        <taxon>Pseudomonadati</taxon>
        <taxon>Pseudomonadota</taxon>
        <taxon>Gammaproteobacteria</taxon>
        <taxon>Enterobacterales</taxon>
        <taxon>Enterobacteriaceae</taxon>
        <taxon>Salmonella</taxon>
    </lineage>
</organism>
<protein>
    <recommendedName>
        <fullName evidence="1">Probable endonuclease 4</fullName>
        <ecNumber evidence="1">3.1.21.2</ecNumber>
    </recommendedName>
    <alternativeName>
        <fullName evidence="1">Endodeoxyribonuclease IV</fullName>
    </alternativeName>
    <alternativeName>
        <fullName evidence="1">Endonuclease IV</fullName>
    </alternativeName>
</protein>